<accession>O58374</accession>
<name>Y640_PYRHO</name>
<dbReference type="EMBL" id="BA000001">
    <property type="protein sequence ID" value="BAA29731.1"/>
    <property type="molecule type" value="Genomic_DNA"/>
</dbReference>
<dbReference type="PIR" id="A71109">
    <property type="entry name" value="A71109"/>
</dbReference>
<dbReference type="SMR" id="O58374"/>
<dbReference type="STRING" id="70601.gene:9377584"/>
<dbReference type="EnsemblBacteria" id="BAA29731">
    <property type="protein sequence ID" value="BAA29731"/>
    <property type="gene ID" value="BAA29731"/>
</dbReference>
<dbReference type="KEGG" id="pho:PH0640"/>
<dbReference type="eggNOG" id="arCOG02267">
    <property type="taxonomic scope" value="Archaea"/>
</dbReference>
<dbReference type="OrthoDB" id="101311at2157"/>
<dbReference type="Proteomes" id="UP000000752">
    <property type="component" value="Chromosome"/>
</dbReference>
<dbReference type="GO" id="GO:0005886">
    <property type="term" value="C:plasma membrane"/>
    <property type="evidence" value="ECO:0007669"/>
    <property type="project" value="UniProtKB-SubCell"/>
</dbReference>
<dbReference type="GO" id="GO:0005315">
    <property type="term" value="F:phosphate transmembrane transporter activity"/>
    <property type="evidence" value="ECO:0007669"/>
    <property type="project" value="InterPro"/>
</dbReference>
<dbReference type="GO" id="GO:0035435">
    <property type="term" value="P:phosphate ion transmembrane transport"/>
    <property type="evidence" value="ECO:0007669"/>
    <property type="project" value="TreeGrafter"/>
</dbReference>
<dbReference type="InterPro" id="IPR001204">
    <property type="entry name" value="Phos_transporter"/>
</dbReference>
<dbReference type="PANTHER" id="PTHR11101">
    <property type="entry name" value="PHOSPHATE TRANSPORTER"/>
    <property type="match status" value="1"/>
</dbReference>
<dbReference type="PANTHER" id="PTHR11101:SF80">
    <property type="entry name" value="PHOSPHATE TRANSPORTER"/>
    <property type="match status" value="1"/>
</dbReference>
<dbReference type="Pfam" id="PF01384">
    <property type="entry name" value="PHO4"/>
    <property type="match status" value="1"/>
</dbReference>
<evidence type="ECO:0000255" key="1"/>
<evidence type="ECO:0000305" key="2"/>
<reference key="1">
    <citation type="journal article" date="1998" name="DNA Res.">
        <title>Complete sequence and gene organization of the genome of a hyper-thermophilic archaebacterium, Pyrococcus horikoshii OT3.</title>
        <authorList>
            <person name="Kawarabayasi Y."/>
            <person name="Sawada M."/>
            <person name="Horikawa H."/>
            <person name="Haikawa Y."/>
            <person name="Hino Y."/>
            <person name="Yamamoto S."/>
            <person name="Sekine M."/>
            <person name="Baba S."/>
            <person name="Kosugi H."/>
            <person name="Hosoyama A."/>
            <person name="Nagai Y."/>
            <person name="Sakai M."/>
            <person name="Ogura K."/>
            <person name="Otsuka R."/>
            <person name="Nakazawa H."/>
            <person name="Takamiya M."/>
            <person name="Ohfuku Y."/>
            <person name="Funahashi T."/>
            <person name="Tanaka T."/>
            <person name="Kudoh Y."/>
            <person name="Yamazaki J."/>
            <person name="Kushida N."/>
            <person name="Oguchi A."/>
            <person name="Aoki K."/>
            <person name="Yoshizawa T."/>
            <person name="Nakamura Y."/>
            <person name="Robb F.T."/>
            <person name="Horikoshi K."/>
            <person name="Masuchi Y."/>
            <person name="Shizuya H."/>
            <person name="Kikuchi H."/>
        </authorList>
    </citation>
    <scope>NUCLEOTIDE SEQUENCE [LARGE SCALE GENOMIC DNA]</scope>
    <source>
        <strain>ATCC 700860 / DSM 12428 / JCM 9974 / NBRC 100139 / OT-3</strain>
    </source>
</reference>
<feature type="chain" id="PRO_0000080807" description="Putative phosphate permease PH0640">
    <location>
        <begin position="1"/>
        <end position="406"/>
    </location>
</feature>
<feature type="transmembrane region" description="Helical" evidence="1">
    <location>
        <begin position="2"/>
        <end position="22"/>
    </location>
</feature>
<feature type="transmembrane region" description="Helical" evidence="1">
    <location>
        <begin position="45"/>
        <end position="65"/>
    </location>
</feature>
<feature type="transmembrane region" description="Helical" evidence="1">
    <location>
        <begin position="83"/>
        <end position="103"/>
    </location>
</feature>
<feature type="transmembrane region" description="Helical" evidence="1">
    <location>
        <begin position="114"/>
        <end position="134"/>
    </location>
</feature>
<feature type="transmembrane region" description="Helical" evidence="1">
    <location>
        <begin position="140"/>
        <end position="160"/>
    </location>
</feature>
<feature type="transmembrane region" description="Helical" evidence="1">
    <location>
        <begin position="182"/>
        <end position="202"/>
    </location>
</feature>
<feature type="transmembrane region" description="Helical" evidence="1">
    <location>
        <begin position="207"/>
        <end position="227"/>
    </location>
</feature>
<feature type="transmembrane region" description="Helical" evidence="1">
    <location>
        <begin position="265"/>
        <end position="285"/>
    </location>
</feature>
<feature type="transmembrane region" description="Helical" evidence="1">
    <location>
        <begin position="288"/>
        <end position="308"/>
    </location>
</feature>
<feature type="transmembrane region" description="Helical" evidence="1">
    <location>
        <begin position="330"/>
        <end position="350"/>
    </location>
</feature>
<feature type="transmembrane region" description="Helical" evidence="1">
    <location>
        <begin position="385"/>
        <end position="405"/>
    </location>
</feature>
<gene>
    <name type="ordered locus">PH0640</name>
</gene>
<proteinExistence type="inferred from homology"/>
<sequence>MIPIDPWIILTLILGFGMAWAIGANDAANSMSTAVGAGAITPKQAVLIAGVLEFTGAYFFGKTVTETIRKGIIDPSKISDPNVLIYGSIAALLGATIWLIIATKYGLPVSTTHSIIGGIVGYGIIYGGIGIVNWDKMVRVVLSWVLSPIVGAIFAFLVFRALRRTVLQSEDPVKSAKRWSPFWIGLAFIVIGTMFYIKVLHGSSLYIGILKYGIPTGIIVFIITSMLLRVKFPNVDPYLGAEVIFRKVQVITSGYVALAHGANDVANAIGPVAAVYTIATMGLAGAKVPVPRWILALGGLGIAIGVATYGYRVMETVGKKITELTNTRGFTIDFSAATVVLIASWLGMPISTTHTVVGAVIGVGLARGVKAINKSVVKDIIISWFVTVPVAGIIAGIIFKVLLLIG</sequence>
<comment type="function">
    <text>Potential transporter for phosphate.</text>
</comment>
<comment type="subcellular location">
    <subcellularLocation>
        <location evidence="2">Cell membrane</location>
        <topology evidence="2">Multi-pass membrane protein</topology>
    </subcellularLocation>
</comment>
<comment type="similarity">
    <text evidence="2">Belongs to the inorganic phosphate transporter (PiT) (TC 2.A.20) family.</text>
</comment>
<organism>
    <name type="scientific">Pyrococcus horikoshii (strain ATCC 700860 / DSM 12428 / JCM 9974 / NBRC 100139 / OT-3)</name>
    <dbReference type="NCBI Taxonomy" id="70601"/>
    <lineage>
        <taxon>Archaea</taxon>
        <taxon>Methanobacteriati</taxon>
        <taxon>Methanobacteriota</taxon>
        <taxon>Thermococci</taxon>
        <taxon>Thermococcales</taxon>
        <taxon>Thermococcaceae</taxon>
        <taxon>Pyrococcus</taxon>
    </lineage>
</organism>
<protein>
    <recommendedName>
        <fullName>Putative phosphate permease PH0640</fullName>
    </recommendedName>
</protein>
<keyword id="KW-1003">Cell membrane</keyword>
<keyword id="KW-0472">Membrane</keyword>
<keyword id="KW-0592">Phosphate transport</keyword>
<keyword id="KW-0812">Transmembrane</keyword>
<keyword id="KW-1133">Transmembrane helix</keyword>
<keyword id="KW-0813">Transport</keyword>